<proteinExistence type="evidence at protein level"/>
<gene>
    <name type="primary">RPL19</name>
</gene>
<feature type="chain" id="PRO_0000131169" description="Large ribosomal subunit protein eL19">
    <location>
        <begin position="1"/>
        <end position="196"/>
    </location>
</feature>
<feature type="region of interest" description="Disordered" evidence="2">
    <location>
        <begin position="157"/>
        <end position="176"/>
    </location>
</feature>
<feature type="compositionally biased region" description="Basic and acidic residues" evidence="2">
    <location>
        <begin position="159"/>
        <end position="176"/>
    </location>
</feature>
<feature type="modified residue" description="Citrulline" evidence="1">
    <location>
        <position position="5"/>
    </location>
</feature>
<feature type="modified residue" description="Phosphoserine" evidence="11">
    <location>
        <position position="13"/>
    </location>
</feature>
<feature type="modified residue" description="Citrulline" evidence="1">
    <location>
        <position position="16"/>
    </location>
</feature>
<feature type="modified residue" description="Citrulline" evidence="1">
    <location>
        <position position="38"/>
    </location>
</feature>
<feature type="modified residue" description="Phosphoserine" evidence="12">
    <location>
        <position position="164"/>
    </location>
</feature>
<feature type="modified residue" description="Phosphothreonine" evidence="11 12">
    <location>
        <position position="187"/>
    </location>
</feature>
<feature type="cross-link" description="Glycyl lysine isopeptide (Lys-Gly) (interchain with G-Cter in SUMO1)" evidence="13">
    <location>
        <position position="181"/>
    </location>
</feature>
<evidence type="ECO:0000250" key="1">
    <source>
        <dbReference type="UniProtKB" id="P84099"/>
    </source>
</evidence>
<evidence type="ECO:0000256" key="2">
    <source>
        <dbReference type="SAM" id="MobiDB-lite"/>
    </source>
</evidence>
<evidence type="ECO:0000269" key="3">
    <source>
    </source>
</evidence>
<evidence type="ECO:0000269" key="4">
    <source>
    </source>
</evidence>
<evidence type="ECO:0000303" key="5">
    <source>
    </source>
</evidence>
<evidence type="ECO:0000305" key="6"/>
<evidence type="ECO:0007744" key="7">
    <source>
        <dbReference type="PDB" id="6LQM"/>
    </source>
</evidence>
<evidence type="ECO:0007744" key="8">
    <source>
        <dbReference type="PDB" id="6LSR"/>
    </source>
</evidence>
<evidence type="ECO:0007744" key="9">
    <source>
        <dbReference type="PDB" id="6LSS"/>
    </source>
</evidence>
<evidence type="ECO:0007744" key="10">
    <source>
        <dbReference type="PDB" id="6LU8"/>
    </source>
</evidence>
<evidence type="ECO:0007744" key="11">
    <source>
    </source>
</evidence>
<evidence type="ECO:0007744" key="12">
    <source>
    </source>
</evidence>
<evidence type="ECO:0007744" key="13">
    <source>
    </source>
</evidence>
<accession>P84098</accession>
<accession>B2R4K2</accession>
<accession>P14118</accession>
<accession>P22908</accession>
<accession>Q502Y6</accession>
<accession>Q7Z6E4</accession>
<keyword id="KW-0002">3D-structure</keyword>
<keyword id="KW-0164">Citrullination</keyword>
<keyword id="KW-0963">Cytoplasm</keyword>
<keyword id="KW-0903">Direct protein sequencing</keyword>
<keyword id="KW-1017">Isopeptide bond</keyword>
<keyword id="KW-0597">Phosphoprotein</keyword>
<keyword id="KW-1267">Proteomics identification</keyword>
<keyword id="KW-1185">Reference proteome</keyword>
<keyword id="KW-0687">Ribonucleoprotein</keyword>
<keyword id="KW-0689">Ribosomal protein</keyword>
<keyword id="KW-0832">Ubl conjugation</keyword>
<name>RL19_HUMAN</name>
<comment type="function">
    <text evidence="3 4">Component of the large ribosomal subunit (PubMed:23636399, PubMed:32669547). The ribosome is a large ribonucleoprotein complex responsible for the synthesis of proteins in the cell (PubMed:23636399, PubMed:32669547).</text>
</comment>
<comment type="subunit">
    <text evidence="3 4">Component of the large ribosomal subunit.</text>
</comment>
<comment type="interaction">
    <interactant intactId="EBI-916524">
        <id>P84098</id>
    </interactant>
    <interactant intactId="EBI-930964">
        <id>P54253</id>
        <label>ATXN1</label>
    </interactant>
    <organismsDiffer>false</organismsDiffer>
    <experiments>3</experiments>
</comment>
<comment type="interaction">
    <interactant intactId="EBI-916524">
        <id>P84098</id>
    </interactant>
    <interactant intactId="EBI-466029">
        <id>P42858</id>
        <label>HTT</label>
    </interactant>
    <organismsDiffer>false</organismsDiffer>
    <experiments>6</experiments>
</comment>
<comment type="interaction">
    <interactant intactId="EBI-916524">
        <id>P84098</id>
    </interactant>
    <interactant intactId="EBI-5325200">
        <id>Q13405</id>
        <label>MRPL49</label>
    </interactant>
    <organismsDiffer>false</organismsDiffer>
    <experiments>2</experiments>
</comment>
<comment type="interaction">
    <interactant intactId="EBI-916524">
        <id>P84098</id>
    </interactant>
    <interactant intactId="EBI-710997">
        <id>P54274</id>
        <label>TERF1</label>
    </interactant>
    <organismsDiffer>false</organismsDiffer>
    <experiments>2</experiments>
</comment>
<comment type="subcellular location">
    <subcellularLocation>
        <location evidence="3">Cytoplasm</location>
    </subcellularLocation>
</comment>
<comment type="PTM">
    <text evidence="1">Citrullinated by PADI4.</text>
</comment>
<comment type="similarity">
    <text evidence="6">Belongs to the eukaryotic ribosomal protein eL19 family.</text>
</comment>
<comment type="sequence caution" evidence="6">
    <conflict type="erroneous initiation">
        <sequence resource="EMBL-CDS" id="CAD97677"/>
    </conflict>
</comment>
<reference key="1">
    <citation type="journal article" date="1992" name="Nucleic Acids Res.">
        <title>Human cDNAs encoding elongation factor 1 gamma and the ribosomal protein L19.</title>
        <authorList>
            <person name="Kumabe T."/>
            <person name="Schma Y."/>
            <person name="Yamamoto T."/>
        </authorList>
    </citation>
    <scope>NUCLEOTIDE SEQUENCE [MRNA]</scope>
</reference>
<reference key="2">
    <citation type="journal article" date="1993" name="Cancer Res.">
        <title>High-level expression of the ribosomal protein L19 in human breast tumors that overexpress erbB-2.</title>
        <authorList>
            <person name="Henry J.L."/>
            <person name="Coggin D.L."/>
            <person name="King C.R."/>
        </authorList>
    </citation>
    <scope>NUCLEOTIDE SEQUENCE [MRNA]</scope>
</reference>
<reference key="3">
    <citation type="journal article" date="2004" name="Nat. Genet.">
        <title>Complete sequencing and characterization of 21,243 full-length human cDNAs.</title>
        <authorList>
            <person name="Ota T."/>
            <person name="Suzuki Y."/>
            <person name="Nishikawa T."/>
            <person name="Otsuki T."/>
            <person name="Sugiyama T."/>
            <person name="Irie R."/>
            <person name="Wakamatsu A."/>
            <person name="Hayashi K."/>
            <person name="Sato H."/>
            <person name="Nagai K."/>
            <person name="Kimura K."/>
            <person name="Makita H."/>
            <person name="Sekine M."/>
            <person name="Obayashi M."/>
            <person name="Nishi T."/>
            <person name="Shibahara T."/>
            <person name="Tanaka T."/>
            <person name="Ishii S."/>
            <person name="Yamamoto J."/>
            <person name="Saito K."/>
            <person name="Kawai Y."/>
            <person name="Isono Y."/>
            <person name="Nakamura Y."/>
            <person name="Nagahari K."/>
            <person name="Murakami K."/>
            <person name="Yasuda T."/>
            <person name="Iwayanagi T."/>
            <person name="Wagatsuma M."/>
            <person name="Shiratori A."/>
            <person name="Sudo H."/>
            <person name="Hosoiri T."/>
            <person name="Kaku Y."/>
            <person name="Kodaira H."/>
            <person name="Kondo H."/>
            <person name="Sugawara M."/>
            <person name="Takahashi M."/>
            <person name="Kanda K."/>
            <person name="Yokoi T."/>
            <person name="Furuya T."/>
            <person name="Kikkawa E."/>
            <person name="Omura Y."/>
            <person name="Abe K."/>
            <person name="Kamihara K."/>
            <person name="Katsuta N."/>
            <person name="Sato K."/>
            <person name="Tanikawa M."/>
            <person name="Yamazaki M."/>
            <person name="Ninomiya K."/>
            <person name="Ishibashi T."/>
            <person name="Yamashita H."/>
            <person name="Murakawa K."/>
            <person name="Fujimori K."/>
            <person name="Tanai H."/>
            <person name="Kimata M."/>
            <person name="Watanabe M."/>
            <person name="Hiraoka S."/>
            <person name="Chiba Y."/>
            <person name="Ishida S."/>
            <person name="Ono Y."/>
            <person name="Takiguchi S."/>
            <person name="Watanabe S."/>
            <person name="Yosida M."/>
            <person name="Hotuta T."/>
            <person name="Kusano J."/>
            <person name="Kanehori K."/>
            <person name="Takahashi-Fujii A."/>
            <person name="Hara H."/>
            <person name="Tanase T.-O."/>
            <person name="Nomura Y."/>
            <person name="Togiya S."/>
            <person name="Komai F."/>
            <person name="Hara R."/>
            <person name="Takeuchi K."/>
            <person name="Arita M."/>
            <person name="Imose N."/>
            <person name="Musashino K."/>
            <person name="Yuuki H."/>
            <person name="Oshima A."/>
            <person name="Sasaki N."/>
            <person name="Aotsuka S."/>
            <person name="Yoshikawa Y."/>
            <person name="Matsunawa H."/>
            <person name="Ichihara T."/>
            <person name="Shiohata N."/>
            <person name="Sano S."/>
            <person name="Moriya S."/>
            <person name="Momiyama H."/>
            <person name="Satoh N."/>
            <person name="Takami S."/>
            <person name="Terashima Y."/>
            <person name="Suzuki O."/>
            <person name="Nakagawa S."/>
            <person name="Senoh A."/>
            <person name="Mizoguchi H."/>
            <person name="Goto Y."/>
            <person name="Shimizu F."/>
            <person name="Wakebe H."/>
            <person name="Hishigaki H."/>
            <person name="Watanabe T."/>
            <person name="Sugiyama A."/>
            <person name="Takemoto M."/>
            <person name="Kawakami B."/>
            <person name="Yamazaki M."/>
            <person name="Watanabe K."/>
            <person name="Kumagai A."/>
            <person name="Itakura S."/>
            <person name="Fukuzumi Y."/>
            <person name="Fujimori Y."/>
            <person name="Komiyama M."/>
            <person name="Tashiro H."/>
            <person name="Tanigami A."/>
            <person name="Fujiwara T."/>
            <person name="Ono T."/>
            <person name="Yamada K."/>
            <person name="Fujii Y."/>
            <person name="Ozaki K."/>
            <person name="Hirao M."/>
            <person name="Ohmori Y."/>
            <person name="Kawabata A."/>
            <person name="Hikiji T."/>
            <person name="Kobatake N."/>
            <person name="Inagaki H."/>
            <person name="Ikema Y."/>
            <person name="Okamoto S."/>
            <person name="Okitani R."/>
            <person name="Kawakami T."/>
            <person name="Noguchi S."/>
            <person name="Itoh T."/>
            <person name="Shigeta K."/>
            <person name="Senba T."/>
            <person name="Matsumura K."/>
            <person name="Nakajima Y."/>
            <person name="Mizuno T."/>
            <person name="Morinaga M."/>
            <person name="Sasaki M."/>
            <person name="Togashi T."/>
            <person name="Oyama M."/>
            <person name="Hata H."/>
            <person name="Watanabe M."/>
            <person name="Komatsu T."/>
            <person name="Mizushima-Sugano J."/>
            <person name="Satoh T."/>
            <person name="Shirai Y."/>
            <person name="Takahashi Y."/>
            <person name="Nakagawa K."/>
            <person name="Okumura K."/>
            <person name="Nagase T."/>
            <person name="Nomura N."/>
            <person name="Kikuchi H."/>
            <person name="Masuho Y."/>
            <person name="Yamashita R."/>
            <person name="Nakai K."/>
            <person name="Yada T."/>
            <person name="Nakamura Y."/>
            <person name="Ohara O."/>
            <person name="Isogai T."/>
            <person name="Sugano S."/>
        </authorList>
    </citation>
    <scope>NUCLEOTIDE SEQUENCE [LARGE SCALE MRNA]</scope>
    <source>
        <tissue>Brain</tissue>
    </source>
</reference>
<reference key="4">
    <citation type="journal article" date="2007" name="BMC Genomics">
        <title>The full-ORF clone resource of the German cDNA consortium.</title>
        <authorList>
            <person name="Bechtel S."/>
            <person name="Rosenfelder H."/>
            <person name="Duda A."/>
            <person name="Schmidt C.P."/>
            <person name="Ernst U."/>
            <person name="Wellenreuther R."/>
            <person name="Mehrle A."/>
            <person name="Schuster C."/>
            <person name="Bahr A."/>
            <person name="Bloecker H."/>
            <person name="Heubner D."/>
            <person name="Hoerlein A."/>
            <person name="Michel G."/>
            <person name="Wedler H."/>
            <person name="Koehrer K."/>
            <person name="Ottenwaelder B."/>
            <person name="Poustka A."/>
            <person name="Wiemann S."/>
            <person name="Schupp I."/>
        </authorList>
    </citation>
    <scope>NUCLEOTIDE SEQUENCE [LARGE SCALE MRNA]</scope>
    <source>
        <tissue>Liver</tissue>
    </source>
</reference>
<reference key="5">
    <citation type="journal article" date="2004" name="Genome Res.">
        <title>The status, quality, and expansion of the NIH full-length cDNA project: the Mammalian Gene Collection (MGC).</title>
        <authorList>
            <consortium name="The MGC Project Team"/>
        </authorList>
    </citation>
    <scope>NUCLEOTIDE SEQUENCE [LARGE SCALE MRNA]</scope>
    <source>
        <tissue>Brain</tissue>
        <tissue>Hypothalamus</tissue>
        <tissue>Muscle</tissue>
    </source>
</reference>
<reference key="6">
    <citation type="submission" date="2008-03" db="UniProtKB">
        <authorList>
            <person name="Bienvenut W.V."/>
            <person name="Vousden K.H."/>
            <person name="Lukashchuk N."/>
        </authorList>
    </citation>
    <scope>PROTEIN SEQUENCE OF 10-16; 22-38 AND 154-162</scope>
    <scope>IDENTIFICATION BY MASS SPECTROMETRY</scope>
    <source>
        <tissue>Lung carcinoma</tissue>
    </source>
</reference>
<reference key="7">
    <citation type="journal article" date="2003" name="Nature">
        <title>Proteomic characterization of the human centrosome by protein correlation profiling.</title>
        <authorList>
            <person name="Andersen J.S."/>
            <person name="Wilkinson C.J."/>
            <person name="Mayor T."/>
            <person name="Mortensen P."/>
            <person name="Nigg E.A."/>
            <person name="Mann M."/>
        </authorList>
    </citation>
    <scope>IDENTIFICATION BY MASS SPECTROMETRY</scope>
    <source>
        <tissue>Lymphoblast</tissue>
    </source>
</reference>
<reference key="8">
    <citation type="journal article" date="2008" name="Mol. Cell">
        <title>Kinase-selective enrichment enables quantitative phosphoproteomics of the kinome across the cell cycle.</title>
        <authorList>
            <person name="Daub H."/>
            <person name="Olsen J.V."/>
            <person name="Bairlein M."/>
            <person name="Gnad F."/>
            <person name="Oppermann F.S."/>
            <person name="Korner R."/>
            <person name="Greff Z."/>
            <person name="Keri G."/>
            <person name="Stemmann O."/>
            <person name="Mann M."/>
        </authorList>
    </citation>
    <scope>IDENTIFICATION BY MASS SPECTROMETRY [LARGE SCALE ANALYSIS]</scope>
    <source>
        <tissue>Cervix carcinoma</tissue>
    </source>
</reference>
<reference key="9">
    <citation type="journal article" date="2008" name="Proc. Natl. Acad. Sci. U.S.A.">
        <title>A quantitative atlas of mitotic phosphorylation.</title>
        <authorList>
            <person name="Dephoure N."/>
            <person name="Zhou C."/>
            <person name="Villen J."/>
            <person name="Beausoleil S.A."/>
            <person name="Bakalarski C.E."/>
            <person name="Elledge S.J."/>
            <person name="Gygi S.P."/>
        </authorList>
    </citation>
    <scope>PHOSPHORYLATION [LARGE SCALE ANALYSIS] AT SER-13 AND THR-187</scope>
    <scope>IDENTIFICATION BY MASS SPECTROMETRY [LARGE SCALE ANALYSIS]</scope>
    <source>
        <tissue>Cervix carcinoma</tissue>
    </source>
</reference>
<reference key="10">
    <citation type="journal article" date="2011" name="BMC Syst. Biol.">
        <title>Initial characterization of the human central proteome.</title>
        <authorList>
            <person name="Burkard T.R."/>
            <person name="Planyavsky M."/>
            <person name="Kaupe I."/>
            <person name="Breitwieser F.P."/>
            <person name="Buerckstuemmer T."/>
            <person name="Bennett K.L."/>
            <person name="Superti-Furga G."/>
            <person name="Colinge J."/>
        </authorList>
    </citation>
    <scope>IDENTIFICATION BY MASS SPECTROMETRY [LARGE SCALE ANALYSIS]</scope>
</reference>
<reference key="11">
    <citation type="journal article" date="2013" name="J. Proteome Res.">
        <title>Toward a comprehensive characterization of a human cancer cell phosphoproteome.</title>
        <authorList>
            <person name="Zhou H."/>
            <person name="Di Palma S."/>
            <person name="Preisinger C."/>
            <person name="Peng M."/>
            <person name="Polat A.N."/>
            <person name="Heck A.J."/>
            <person name="Mohammed S."/>
        </authorList>
    </citation>
    <scope>PHOSPHORYLATION [LARGE SCALE ANALYSIS] AT SER-164 AND THR-187</scope>
    <scope>IDENTIFICATION BY MASS SPECTROMETRY [LARGE SCALE ANALYSIS]</scope>
    <source>
        <tissue>Cervix carcinoma</tissue>
        <tissue>Erythroleukemia</tissue>
    </source>
</reference>
<reference key="12">
    <citation type="journal article" date="2014" name="Curr. Opin. Struct. Biol.">
        <title>A new system for naming ribosomal proteins.</title>
        <authorList>
            <person name="Ban N."/>
            <person name="Beckmann R."/>
            <person name="Cate J.H.D."/>
            <person name="Dinman J.D."/>
            <person name="Dragon F."/>
            <person name="Ellis S.R."/>
            <person name="Lafontaine D.L.J."/>
            <person name="Lindahl L."/>
            <person name="Liljas A."/>
            <person name="Lipton J.M."/>
            <person name="McAlear M.A."/>
            <person name="Moore P.B."/>
            <person name="Noller H.F."/>
            <person name="Ortega J."/>
            <person name="Panse V.G."/>
            <person name="Ramakrishnan V."/>
            <person name="Spahn C.M.T."/>
            <person name="Steitz T.A."/>
            <person name="Tchorzewski M."/>
            <person name="Tollervey D."/>
            <person name="Warren A.J."/>
            <person name="Williamson J.R."/>
            <person name="Wilson D."/>
            <person name="Yonath A."/>
            <person name="Yusupov M."/>
        </authorList>
    </citation>
    <scope>NOMENCLATURE</scope>
</reference>
<reference key="13">
    <citation type="journal article" date="2014" name="J. Proteomics">
        <title>An enzyme assisted RP-RPLC approach for in-depth analysis of human liver phosphoproteome.</title>
        <authorList>
            <person name="Bian Y."/>
            <person name="Song C."/>
            <person name="Cheng K."/>
            <person name="Dong M."/>
            <person name="Wang F."/>
            <person name="Huang J."/>
            <person name="Sun D."/>
            <person name="Wang L."/>
            <person name="Ye M."/>
            <person name="Zou H."/>
        </authorList>
    </citation>
    <scope>IDENTIFICATION BY MASS SPECTROMETRY [LARGE SCALE ANALYSIS]</scope>
    <source>
        <tissue>Liver</tissue>
    </source>
</reference>
<reference key="14">
    <citation type="journal article" date="2014" name="Proc. Natl. Acad. Sci. U.S.A.">
        <title>Mapping of SUMO sites and analysis of SUMOylation changes induced by external stimuli.</title>
        <authorList>
            <person name="Impens F."/>
            <person name="Radoshevich L."/>
            <person name="Cossart P."/>
            <person name="Ribet D."/>
        </authorList>
    </citation>
    <scope>SUMOYLATION [LARGE SCALE ANALYSIS] AT LYS-181</scope>
    <scope>IDENTIFICATION BY MASS SPECTROMETRY [LARGE SCALE ANALYSIS]</scope>
</reference>
<reference key="15">
    <citation type="journal article" date="2015" name="Proteomics">
        <title>N-terminome analysis of the human mitochondrial proteome.</title>
        <authorList>
            <person name="Vaca Jacome A.S."/>
            <person name="Rabilloud T."/>
            <person name="Schaeffer-Reiss C."/>
            <person name="Rompais M."/>
            <person name="Ayoub D."/>
            <person name="Lane L."/>
            <person name="Bairoch A."/>
            <person name="Van Dorsselaer A."/>
            <person name="Carapito C."/>
        </authorList>
    </citation>
    <scope>IDENTIFICATION BY MASS SPECTROMETRY [LARGE SCALE ANALYSIS]</scope>
</reference>
<reference key="16">
    <citation type="journal article" date="2013" name="Nature">
        <title>Structures of the human and Drosophila 80S ribosome.</title>
        <authorList>
            <person name="Anger A.M."/>
            <person name="Armache J.P."/>
            <person name="Berninghausen O."/>
            <person name="Habeck M."/>
            <person name="Subklewe M."/>
            <person name="Wilson D.N."/>
            <person name="Beckmann R."/>
        </authorList>
    </citation>
    <scope>STRUCTURE BY ELECTRON MICROSCOPY (5.0 ANGSTROMS)</scope>
    <scope>FUNCTION</scope>
    <scope>SUBUNIT</scope>
    <scope>SUBCELLULAR LOCATION</scope>
</reference>
<reference evidence="7 8 9 10" key="17">
    <citation type="journal article" date="2020" name="Nat. Commun.">
        <title>Structural snapshots of human pre-60S ribosomal particles before and after nuclear export.</title>
        <authorList>
            <person name="Liang X."/>
            <person name="Zuo M.Q."/>
            <person name="Zhang Y."/>
            <person name="Li N."/>
            <person name="Ma C."/>
            <person name="Dong M.Q."/>
            <person name="Gao N."/>
        </authorList>
    </citation>
    <scope>STRUCTURE BY ELECTRON MICROSCOPY (3.09 ANGSTROMS)</scope>
    <scope>FUNCTION</scope>
    <scope>SUBUNIT</scope>
</reference>
<dbReference type="EMBL" id="X63527">
    <property type="protein sequence ID" value="CAA45090.1"/>
    <property type="molecule type" value="mRNA"/>
</dbReference>
<dbReference type="EMBL" id="S56985">
    <property type="protein sequence ID" value="AAB25672.1"/>
    <property type="molecule type" value="mRNA"/>
</dbReference>
<dbReference type="EMBL" id="AK311858">
    <property type="protein sequence ID" value="BAG34799.1"/>
    <property type="molecule type" value="mRNA"/>
</dbReference>
<dbReference type="EMBL" id="BX537435">
    <property type="protein sequence ID" value="CAD97677.1"/>
    <property type="status" value="ALT_INIT"/>
    <property type="molecule type" value="mRNA"/>
</dbReference>
<dbReference type="EMBL" id="BC000530">
    <property type="protein sequence ID" value="AAH00530.1"/>
    <property type="molecule type" value="mRNA"/>
</dbReference>
<dbReference type="EMBL" id="BC013016">
    <property type="protein sequence ID" value="AAH13016.1"/>
    <property type="molecule type" value="mRNA"/>
</dbReference>
<dbReference type="EMBL" id="BC062709">
    <property type="protein sequence ID" value="AAH62709.1"/>
    <property type="molecule type" value="mRNA"/>
</dbReference>
<dbReference type="EMBL" id="BC066315">
    <property type="protein sequence ID" value="AAH66315.1"/>
    <property type="molecule type" value="mRNA"/>
</dbReference>
<dbReference type="EMBL" id="BC095445">
    <property type="protein sequence ID" value="AAH95445.1"/>
    <property type="molecule type" value="mRNA"/>
</dbReference>
<dbReference type="CCDS" id="CCDS42312.1"/>
<dbReference type="PIR" id="A48992">
    <property type="entry name" value="A48992"/>
</dbReference>
<dbReference type="RefSeq" id="NP_000972.1">
    <property type="nucleotide sequence ID" value="NM_000981.4"/>
</dbReference>
<dbReference type="PDB" id="4UG0">
    <property type="method" value="EM"/>
    <property type="chains" value="LR=1-196"/>
</dbReference>
<dbReference type="PDB" id="4V6X">
    <property type="method" value="EM"/>
    <property type="resolution" value="5.00 A"/>
    <property type="chains" value="CR=1-196"/>
</dbReference>
<dbReference type="PDB" id="5A2Q">
    <property type="method" value="EM"/>
    <property type="resolution" value="3.90 A"/>
    <property type="chains" value="r=162-174"/>
</dbReference>
<dbReference type="PDB" id="5AJ0">
    <property type="method" value="EM"/>
    <property type="resolution" value="3.50 A"/>
    <property type="chains" value="AR=1-196"/>
</dbReference>
<dbReference type="PDB" id="5LKS">
    <property type="method" value="EM"/>
    <property type="resolution" value="3.60 A"/>
    <property type="chains" value="LR=1-196"/>
</dbReference>
<dbReference type="PDB" id="5T2C">
    <property type="method" value="EM"/>
    <property type="resolution" value="3.60 A"/>
    <property type="chains" value="L=1-196"/>
</dbReference>
<dbReference type="PDB" id="6IP5">
    <property type="method" value="EM"/>
    <property type="resolution" value="3.90 A"/>
    <property type="chains" value="2L=1-196"/>
</dbReference>
<dbReference type="PDB" id="6IP6">
    <property type="method" value="EM"/>
    <property type="resolution" value="4.50 A"/>
    <property type="chains" value="2L=1-196"/>
</dbReference>
<dbReference type="PDB" id="6IP8">
    <property type="method" value="EM"/>
    <property type="resolution" value="3.90 A"/>
    <property type="chains" value="2L=1-196"/>
</dbReference>
<dbReference type="PDB" id="6LQM">
    <property type="method" value="EM"/>
    <property type="resolution" value="3.09 A"/>
    <property type="chains" value="a=1-196"/>
</dbReference>
<dbReference type="PDB" id="6LSR">
    <property type="method" value="EM"/>
    <property type="resolution" value="3.13 A"/>
    <property type="chains" value="a=1-196"/>
</dbReference>
<dbReference type="PDB" id="6LSS">
    <property type="method" value="EM"/>
    <property type="resolution" value="3.23 A"/>
    <property type="chains" value="a=1-196"/>
</dbReference>
<dbReference type="PDB" id="6LU8">
    <property type="method" value="EM"/>
    <property type="resolution" value="3.13 A"/>
    <property type="chains" value="a=1-196"/>
</dbReference>
<dbReference type="PDB" id="6OLE">
    <property type="method" value="EM"/>
    <property type="resolution" value="3.10 A"/>
    <property type="chains" value="S=2-182"/>
</dbReference>
<dbReference type="PDB" id="6OLF">
    <property type="method" value="EM"/>
    <property type="resolution" value="3.90 A"/>
    <property type="chains" value="S=2-182"/>
</dbReference>
<dbReference type="PDB" id="6OLG">
    <property type="method" value="EM"/>
    <property type="resolution" value="3.40 A"/>
    <property type="chains" value="AR=2-182"/>
</dbReference>
<dbReference type="PDB" id="6OLI">
    <property type="method" value="EM"/>
    <property type="resolution" value="3.50 A"/>
    <property type="chains" value="S=2-182"/>
</dbReference>
<dbReference type="PDB" id="6OLZ">
    <property type="method" value="EM"/>
    <property type="resolution" value="3.90 A"/>
    <property type="chains" value="AR=2-182"/>
</dbReference>
<dbReference type="PDB" id="6OM0">
    <property type="method" value="EM"/>
    <property type="resolution" value="3.10 A"/>
    <property type="chains" value="S=2-182"/>
</dbReference>
<dbReference type="PDB" id="6OM7">
    <property type="method" value="EM"/>
    <property type="resolution" value="3.70 A"/>
    <property type="chains" value="S=2-182"/>
</dbReference>
<dbReference type="PDB" id="6QZP">
    <property type="method" value="EM"/>
    <property type="resolution" value="2.90 A"/>
    <property type="chains" value="LR=2-188"/>
</dbReference>
<dbReference type="PDB" id="6SXO">
    <property type="method" value="EM"/>
    <property type="resolution" value="3.30 A"/>
    <property type="chains" value="LR=1-196"/>
</dbReference>
<dbReference type="PDB" id="6W6L">
    <property type="method" value="EM"/>
    <property type="resolution" value="3.84 A"/>
    <property type="chains" value="S=1-196"/>
</dbReference>
<dbReference type="PDB" id="6XA1">
    <property type="method" value="EM"/>
    <property type="resolution" value="2.80 A"/>
    <property type="chains" value="LR=2-188"/>
</dbReference>
<dbReference type="PDB" id="6Y0G">
    <property type="method" value="EM"/>
    <property type="resolution" value="3.20 A"/>
    <property type="chains" value="LR=1-196"/>
</dbReference>
<dbReference type="PDB" id="6Y2L">
    <property type="method" value="EM"/>
    <property type="resolution" value="3.00 A"/>
    <property type="chains" value="LR=1-196"/>
</dbReference>
<dbReference type="PDB" id="6Y57">
    <property type="method" value="EM"/>
    <property type="resolution" value="3.50 A"/>
    <property type="chains" value="LR=1-196"/>
</dbReference>
<dbReference type="PDB" id="6Y6X">
    <property type="method" value="EM"/>
    <property type="resolution" value="2.80 A"/>
    <property type="chains" value="LR=2-188"/>
</dbReference>
<dbReference type="PDB" id="6Z6L">
    <property type="method" value="EM"/>
    <property type="resolution" value="3.00 A"/>
    <property type="chains" value="LR=1-196"/>
</dbReference>
<dbReference type="PDB" id="6Z6M">
    <property type="method" value="EM"/>
    <property type="resolution" value="3.10 A"/>
    <property type="chains" value="LR=1-196"/>
</dbReference>
<dbReference type="PDB" id="6Z6N">
    <property type="method" value="EM"/>
    <property type="resolution" value="2.90 A"/>
    <property type="chains" value="LR=1-196"/>
</dbReference>
<dbReference type="PDB" id="6ZM7">
    <property type="method" value="EM"/>
    <property type="resolution" value="2.70 A"/>
    <property type="chains" value="LR=1-196"/>
</dbReference>
<dbReference type="PDB" id="6ZME">
    <property type="method" value="EM"/>
    <property type="resolution" value="3.00 A"/>
    <property type="chains" value="LR=1-196"/>
</dbReference>
<dbReference type="PDB" id="6ZMI">
    <property type="method" value="EM"/>
    <property type="resolution" value="2.60 A"/>
    <property type="chains" value="LR=1-196"/>
</dbReference>
<dbReference type="PDB" id="6ZMO">
    <property type="method" value="EM"/>
    <property type="resolution" value="3.10 A"/>
    <property type="chains" value="LR=1-196"/>
</dbReference>
<dbReference type="PDB" id="7BHP">
    <property type="method" value="EM"/>
    <property type="resolution" value="3.30 A"/>
    <property type="chains" value="LR=1-196"/>
</dbReference>
<dbReference type="PDB" id="7F5S">
    <property type="method" value="EM"/>
    <property type="resolution" value="2.72 A"/>
    <property type="chains" value="LR=1-196"/>
</dbReference>
<dbReference type="PDB" id="7OW7">
    <property type="method" value="EM"/>
    <property type="resolution" value="2.20 A"/>
    <property type="chains" value="L=1-196"/>
</dbReference>
<dbReference type="PDB" id="7XNX">
    <property type="method" value="EM"/>
    <property type="resolution" value="2.70 A"/>
    <property type="chains" value="LR=1-196"/>
</dbReference>
<dbReference type="PDB" id="7XNY">
    <property type="method" value="EM"/>
    <property type="resolution" value="2.50 A"/>
    <property type="chains" value="LR=1-196"/>
</dbReference>
<dbReference type="PDB" id="8A3D">
    <property type="method" value="EM"/>
    <property type="resolution" value="1.67 A"/>
    <property type="chains" value="L=1-196"/>
</dbReference>
<dbReference type="PDB" id="8FKY">
    <property type="method" value="EM"/>
    <property type="resolution" value="2.67 A"/>
    <property type="chains" value="LD=1-196"/>
</dbReference>
<dbReference type="PDB" id="8FKZ">
    <property type="method" value="EM"/>
    <property type="resolution" value="3.04 A"/>
    <property type="chains" value="LD=1-196"/>
</dbReference>
<dbReference type="PDB" id="8FL2">
    <property type="method" value="EM"/>
    <property type="resolution" value="2.67 A"/>
    <property type="chains" value="LD=1-196"/>
</dbReference>
<dbReference type="PDB" id="8FL3">
    <property type="method" value="EM"/>
    <property type="resolution" value="2.53 A"/>
    <property type="chains" value="LD=1-196"/>
</dbReference>
<dbReference type="PDB" id="8FL4">
    <property type="method" value="EM"/>
    <property type="resolution" value="2.89 A"/>
    <property type="chains" value="LD=1-196"/>
</dbReference>
<dbReference type="PDB" id="8FL6">
    <property type="method" value="EM"/>
    <property type="resolution" value="2.62 A"/>
    <property type="chains" value="LD=1-196"/>
</dbReference>
<dbReference type="PDB" id="8FL7">
    <property type="method" value="EM"/>
    <property type="resolution" value="2.55 A"/>
    <property type="chains" value="LD=1-196"/>
</dbReference>
<dbReference type="PDB" id="8FL9">
    <property type="method" value="EM"/>
    <property type="resolution" value="2.75 A"/>
    <property type="chains" value="LD=1-196"/>
</dbReference>
<dbReference type="PDB" id="8FLA">
    <property type="method" value="EM"/>
    <property type="resolution" value="2.63 A"/>
    <property type="chains" value="LD=1-196"/>
</dbReference>
<dbReference type="PDB" id="8FLB">
    <property type="method" value="EM"/>
    <property type="resolution" value="2.55 A"/>
    <property type="chains" value="LD=1-196"/>
</dbReference>
<dbReference type="PDB" id="8FLC">
    <property type="method" value="EM"/>
    <property type="resolution" value="2.76 A"/>
    <property type="chains" value="LD=1-196"/>
</dbReference>
<dbReference type="PDB" id="8FLD">
    <property type="method" value="EM"/>
    <property type="resolution" value="2.58 A"/>
    <property type="chains" value="LD=1-196"/>
</dbReference>
<dbReference type="PDB" id="8FLE">
    <property type="method" value="EM"/>
    <property type="resolution" value="2.48 A"/>
    <property type="chains" value="LD=1-196"/>
</dbReference>
<dbReference type="PDB" id="8FLF">
    <property type="method" value="EM"/>
    <property type="resolution" value="2.65 A"/>
    <property type="chains" value="LD=1-196"/>
</dbReference>
<dbReference type="PDB" id="8G5Y">
    <property type="method" value="EM"/>
    <property type="resolution" value="2.29 A"/>
    <property type="chains" value="LR=1-196"/>
</dbReference>
<dbReference type="PDB" id="8G5Z">
    <property type="method" value="EM"/>
    <property type="resolution" value="2.64 A"/>
    <property type="chains" value="LR=2-188"/>
</dbReference>
<dbReference type="PDB" id="8G60">
    <property type="method" value="EM"/>
    <property type="resolution" value="2.54 A"/>
    <property type="chains" value="LR=1-196"/>
</dbReference>
<dbReference type="PDB" id="8G61">
    <property type="method" value="EM"/>
    <property type="resolution" value="2.94 A"/>
    <property type="chains" value="LR=1-196"/>
</dbReference>
<dbReference type="PDB" id="8G6J">
    <property type="method" value="EM"/>
    <property type="resolution" value="2.80 A"/>
    <property type="chains" value="LR=1-196"/>
</dbReference>
<dbReference type="PDB" id="8GLP">
    <property type="method" value="EM"/>
    <property type="resolution" value="1.67 A"/>
    <property type="chains" value="LR=1-196"/>
</dbReference>
<dbReference type="PDB" id="8IDT">
    <property type="method" value="EM"/>
    <property type="resolution" value="2.80 A"/>
    <property type="chains" value="a=1-196"/>
</dbReference>
<dbReference type="PDB" id="8IDY">
    <property type="method" value="EM"/>
    <property type="resolution" value="3.00 A"/>
    <property type="chains" value="a=1-196"/>
</dbReference>
<dbReference type="PDB" id="8IE3">
    <property type="method" value="EM"/>
    <property type="resolution" value="3.30 A"/>
    <property type="chains" value="a=1-196"/>
</dbReference>
<dbReference type="PDB" id="8IFD">
    <property type="method" value="EM"/>
    <property type="resolution" value="2.59 A"/>
    <property type="chains" value="2L=1-196"/>
</dbReference>
<dbReference type="PDB" id="8IFE">
    <property type="method" value="EM"/>
    <property type="resolution" value="2.57 A"/>
    <property type="chains" value="2L=1-196"/>
</dbReference>
<dbReference type="PDB" id="8INE">
    <property type="method" value="EM"/>
    <property type="resolution" value="3.20 A"/>
    <property type="chains" value="a=1-196"/>
</dbReference>
<dbReference type="PDB" id="8INF">
    <property type="method" value="EM"/>
    <property type="resolution" value="3.00 A"/>
    <property type="chains" value="a=1-196"/>
</dbReference>
<dbReference type="PDB" id="8INK">
    <property type="method" value="EM"/>
    <property type="resolution" value="3.20 A"/>
    <property type="chains" value="a=1-196"/>
</dbReference>
<dbReference type="PDB" id="8IPD">
    <property type="method" value="EM"/>
    <property type="resolution" value="3.20 A"/>
    <property type="chains" value="a=1-196"/>
</dbReference>
<dbReference type="PDB" id="8IPX">
    <property type="method" value="EM"/>
    <property type="resolution" value="4.30 A"/>
    <property type="chains" value="a=1-196"/>
</dbReference>
<dbReference type="PDB" id="8IPY">
    <property type="method" value="EM"/>
    <property type="resolution" value="3.20 A"/>
    <property type="chains" value="a=1-196"/>
</dbReference>
<dbReference type="PDB" id="8IR1">
    <property type="method" value="EM"/>
    <property type="resolution" value="3.30 A"/>
    <property type="chains" value="a=1-196"/>
</dbReference>
<dbReference type="PDB" id="8IR3">
    <property type="method" value="EM"/>
    <property type="resolution" value="3.50 A"/>
    <property type="chains" value="a=1-196"/>
</dbReference>
<dbReference type="PDB" id="8JDJ">
    <property type="method" value="EM"/>
    <property type="resolution" value="2.50 A"/>
    <property type="chains" value="W=1-196"/>
</dbReference>
<dbReference type="PDB" id="8JDK">
    <property type="method" value="EM"/>
    <property type="resolution" value="2.26 A"/>
    <property type="chains" value="W=1-196"/>
</dbReference>
<dbReference type="PDB" id="8JDL">
    <property type="method" value="EM"/>
    <property type="resolution" value="2.42 A"/>
    <property type="chains" value="W=1-196"/>
</dbReference>
<dbReference type="PDB" id="8JDM">
    <property type="method" value="EM"/>
    <property type="resolution" value="2.67 A"/>
    <property type="chains" value="W=1-196"/>
</dbReference>
<dbReference type="PDB" id="8K2C">
    <property type="method" value="EM"/>
    <property type="resolution" value="2.40 A"/>
    <property type="chains" value="LR=1-196"/>
</dbReference>
<dbReference type="PDB" id="8OHD">
    <property type="method" value="EM"/>
    <property type="resolution" value="3.10 A"/>
    <property type="chains" value="LR=1-196"/>
</dbReference>
<dbReference type="PDB" id="8OJ0">
    <property type="method" value="EM"/>
    <property type="resolution" value="3.30 A"/>
    <property type="chains" value="LR=1-196"/>
</dbReference>
<dbReference type="PDB" id="8OJ5">
    <property type="method" value="EM"/>
    <property type="resolution" value="2.90 A"/>
    <property type="chains" value="LR=1-196"/>
</dbReference>
<dbReference type="PDB" id="8OJ8">
    <property type="method" value="EM"/>
    <property type="resolution" value="3.30 A"/>
    <property type="chains" value="LR=1-196"/>
</dbReference>
<dbReference type="PDB" id="8ONY">
    <property type="method" value="EM"/>
    <property type="resolution" value="2.92 A"/>
    <property type="chains" value="LR=1-196"/>
</dbReference>
<dbReference type="PDB" id="8QFD">
    <property type="method" value="EM"/>
    <property type="resolution" value="2.20 A"/>
    <property type="chains" value="R=1-196"/>
</dbReference>
<dbReference type="PDB" id="8QOI">
    <property type="method" value="EM"/>
    <property type="resolution" value="1.90 A"/>
    <property type="chains" value="LR=1-196"/>
</dbReference>
<dbReference type="PDB" id="8QYX">
    <property type="method" value="EM"/>
    <property type="resolution" value="1.78 A"/>
    <property type="chains" value="L1=1-196"/>
</dbReference>
<dbReference type="PDB" id="8RL2">
    <property type="method" value="EM"/>
    <property type="resolution" value="2.84 A"/>
    <property type="chains" value="LR=1-196"/>
</dbReference>
<dbReference type="PDB" id="8UKB">
    <property type="method" value="EM"/>
    <property type="resolution" value="3.05 A"/>
    <property type="chains" value="LR=2-188"/>
</dbReference>
<dbReference type="PDB" id="8XSX">
    <property type="method" value="EM"/>
    <property type="resolution" value="2.40 A"/>
    <property type="chains" value="LR=1-196"/>
</dbReference>
<dbReference type="PDB" id="8XSY">
    <property type="method" value="EM"/>
    <property type="resolution" value="3.00 A"/>
    <property type="chains" value="LR=1-196"/>
</dbReference>
<dbReference type="PDB" id="8XSZ">
    <property type="method" value="EM"/>
    <property type="resolution" value="3.20 A"/>
    <property type="chains" value="LR=1-196"/>
</dbReference>
<dbReference type="PDB" id="8Y0W">
    <property type="method" value="EM"/>
    <property type="resolution" value="3.40 A"/>
    <property type="chains" value="LR=1-196"/>
</dbReference>
<dbReference type="PDB" id="8Y0X">
    <property type="method" value="EM"/>
    <property type="resolution" value="3.30 A"/>
    <property type="chains" value="LR=1-196"/>
</dbReference>
<dbReference type="PDB" id="8YOO">
    <property type="method" value="EM"/>
    <property type="resolution" value="2.00 A"/>
    <property type="chains" value="LR=1-196"/>
</dbReference>
<dbReference type="PDB" id="8YOP">
    <property type="method" value="EM"/>
    <property type="resolution" value="2.20 A"/>
    <property type="chains" value="LR=1-196"/>
</dbReference>
<dbReference type="PDB" id="9C3H">
    <property type="method" value="EM"/>
    <property type="resolution" value="2.00 A"/>
    <property type="chains" value="LR=1-196"/>
</dbReference>
<dbReference type="PDB" id="9FPZ">
    <property type="method" value="EM"/>
    <property type="resolution" value="2.69 A"/>
    <property type="chains" value="LR=1-196"/>
</dbReference>
<dbReference type="PDB" id="9FQ0">
    <property type="method" value="EM"/>
    <property type="resolution" value="4.67 A"/>
    <property type="chains" value="LR=1-196"/>
</dbReference>
<dbReference type="PDB" id="9G8M">
    <property type="method" value="EM"/>
    <property type="resolution" value="3.30 A"/>
    <property type="chains" value="LR=1-196"/>
</dbReference>
<dbReference type="PDB" id="9GMO">
    <property type="method" value="EM"/>
    <property type="resolution" value="2.59 A"/>
    <property type="chains" value="L=1-196"/>
</dbReference>
<dbReference type="PDBsum" id="4UG0"/>
<dbReference type="PDBsum" id="4V6X"/>
<dbReference type="PDBsum" id="5A2Q"/>
<dbReference type="PDBsum" id="5AJ0"/>
<dbReference type="PDBsum" id="5LKS"/>
<dbReference type="PDBsum" id="5T2C"/>
<dbReference type="PDBsum" id="6IP5"/>
<dbReference type="PDBsum" id="6IP6"/>
<dbReference type="PDBsum" id="6IP8"/>
<dbReference type="PDBsum" id="6LQM"/>
<dbReference type="PDBsum" id="6LSR"/>
<dbReference type="PDBsum" id="6LSS"/>
<dbReference type="PDBsum" id="6LU8"/>
<dbReference type="PDBsum" id="6OLE"/>
<dbReference type="PDBsum" id="6OLF"/>
<dbReference type="PDBsum" id="6OLG"/>
<dbReference type="PDBsum" id="6OLI"/>
<dbReference type="PDBsum" id="6OLZ"/>
<dbReference type="PDBsum" id="6OM0"/>
<dbReference type="PDBsum" id="6OM7"/>
<dbReference type="PDBsum" id="6QZP"/>
<dbReference type="PDBsum" id="6SXO"/>
<dbReference type="PDBsum" id="6W6L"/>
<dbReference type="PDBsum" id="6XA1"/>
<dbReference type="PDBsum" id="6Y0G"/>
<dbReference type="PDBsum" id="6Y2L"/>
<dbReference type="PDBsum" id="6Y57"/>
<dbReference type="PDBsum" id="6Y6X"/>
<dbReference type="PDBsum" id="6Z6L"/>
<dbReference type="PDBsum" id="6Z6M"/>
<dbReference type="PDBsum" id="6Z6N"/>
<dbReference type="PDBsum" id="6ZM7"/>
<dbReference type="PDBsum" id="6ZME"/>
<dbReference type="PDBsum" id="6ZMI"/>
<dbReference type="PDBsum" id="6ZMO"/>
<dbReference type="PDBsum" id="7BHP"/>
<dbReference type="PDBsum" id="7F5S"/>
<dbReference type="PDBsum" id="7OW7"/>
<dbReference type="PDBsum" id="7XNX"/>
<dbReference type="PDBsum" id="7XNY"/>
<dbReference type="PDBsum" id="8A3D"/>
<dbReference type="PDBsum" id="8FKY"/>
<dbReference type="PDBsum" id="8FKZ"/>
<dbReference type="PDBsum" id="8FL2"/>
<dbReference type="PDBsum" id="8FL3"/>
<dbReference type="PDBsum" id="8FL4"/>
<dbReference type="PDBsum" id="8FL6"/>
<dbReference type="PDBsum" id="8FL7"/>
<dbReference type="PDBsum" id="8FL9"/>
<dbReference type="PDBsum" id="8FLA"/>
<dbReference type="PDBsum" id="8FLB"/>
<dbReference type="PDBsum" id="8FLC"/>
<dbReference type="PDBsum" id="8FLD"/>
<dbReference type="PDBsum" id="8FLE"/>
<dbReference type="PDBsum" id="8FLF"/>
<dbReference type="PDBsum" id="8G5Y"/>
<dbReference type="PDBsum" id="8G5Z"/>
<dbReference type="PDBsum" id="8G60"/>
<dbReference type="PDBsum" id="8G61"/>
<dbReference type="PDBsum" id="8G6J"/>
<dbReference type="PDBsum" id="8GLP"/>
<dbReference type="PDBsum" id="8IDT"/>
<dbReference type="PDBsum" id="8IDY"/>
<dbReference type="PDBsum" id="8IE3"/>
<dbReference type="PDBsum" id="8IFD"/>
<dbReference type="PDBsum" id="8IFE"/>
<dbReference type="PDBsum" id="8INE"/>
<dbReference type="PDBsum" id="8INF"/>
<dbReference type="PDBsum" id="8INK"/>
<dbReference type="PDBsum" id="8IPD"/>
<dbReference type="PDBsum" id="8IPX"/>
<dbReference type="PDBsum" id="8IPY"/>
<dbReference type="PDBsum" id="8IR1"/>
<dbReference type="PDBsum" id="8IR3"/>
<dbReference type="PDBsum" id="8JDJ"/>
<dbReference type="PDBsum" id="8JDK"/>
<dbReference type="PDBsum" id="8JDL"/>
<dbReference type="PDBsum" id="8JDM"/>
<dbReference type="PDBsum" id="8K2C"/>
<dbReference type="PDBsum" id="8OHD"/>
<dbReference type="PDBsum" id="8OJ0"/>
<dbReference type="PDBsum" id="8OJ5"/>
<dbReference type="PDBsum" id="8OJ8"/>
<dbReference type="PDBsum" id="8ONY"/>
<dbReference type="PDBsum" id="8QFD"/>
<dbReference type="PDBsum" id="8QOI"/>
<dbReference type="PDBsum" id="8QYX"/>
<dbReference type="PDBsum" id="8RL2"/>
<dbReference type="PDBsum" id="8UKB"/>
<dbReference type="PDBsum" id="8XSX"/>
<dbReference type="PDBsum" id="8XSY"/>
<dbReference type="PDBsum" id="8XSZ"/>
<dbReference type="PDBsum" id="8Y0W"/>
<dbReference type="PDBsum" id="8Y0X"/>
<dbReference type="PDBsum" id="8YOO"/>
<dbReference type="PDBsum" id="8YOP"/>
<dbReference type="PDBsum" id="9C3H"/>
<dbReference type="PDBsum" id="9FPZ"/>
<dbReference type="PDBsum" id="9FQ0"/>
<dbReference type="PDBsum" id="9G8M"/>
<dbReference type="PDBsum" id="9GMO"/>
<dbReference type="EMDB" id="EMD-0948"/>
<dbReference type="EMDB" id="EMD-0963"/>
<dbReference type="EMDB" id="EMD-0964"/>
<dbReference type="EMDB" id="EMD-0978"/>
<dbReference type="EMDB" id="EMD-10344"/>
<dbReference type="EMDB" id="EMD-10668"/>
<dbReference type="EMDB" id="EMD-10674"/>
<dbReference type="EMDB" id="EMD-10690"/>
<dbReference type="EMDB" id="EMD-10709"/>
<dbReference type="EMDB" id="EMD-11098"/>
<dbReference type="EMDB" id="EMD-11099"/>
<dbReference type="EMDB" id="EMD-11100"/>
<dbReference type="EMDB" id="EMD-11288"/>
<dbReference type="EMDB" id="EMD-11289"/>
<dbReference type="EMDB" id="EMD-11292"/>
<dbReference type="EMDB" id="EMD-11299"/>
<dbReference type="EMDB" id="EMD-12189"/>
<dbReference type="EMDB" id="EMD-13094"/>
<dbReference type="EMDB" id="EMD-15113"/>
<dbReference type="EMDB" id="EMD-16880"/>
<dbReference type="EMDB" id="EMD-16902"/>
<dbReference type="EMDB" id="EMD-16905"/>
<dbReference type="EMDB" id="EMD-16908"/>
<dbReference type="EMDB" id="EMD-17002"/>
<dbReference type="EMDB" id="EMD-18382"/>
<dbReference type="EMDB" id="EMD-18539"/>
<dbReference type="EMDB" id="EMD-18765"/>
<dbReference type="EMDB" id="EMD-19330"/>
<dbReference type="EMDB" id="EMD-29261"/>
<dbReference type="EMDB" id="EMD-29262"/>
<dbReference type="EMDB" id="EMD-29265"/>
<dbReference type="EMDB" id="EMD-29266"/>
<dbReference type="EMDB" id="EMD-29267"/>
<dbReference type="EMDB" id="EMD-29268"/>
<dbReference type="EMDB" id="EMD-29269"/>
<dbReference type="EMDB" id="EMD-29271"/>
<dbReference type="EMDB" id="EMD-29272"/>
<dbReference type="EMDB" id="EMD-29273"/>
<dbReference type="EMDB" id="EMD-29274"/>
<dbReference type="EMDB" id="EMD-29275"/>
<dbReference type="EMDB" id="EMD-29276"/>
<dbReference type="EMDB" id="EMD-29277"/>
<dbReference type="EMDB" id="EMD-29757"/>
<dbReference type="EMDB" id="EMD-29758"/>
<dbReference type="EMDB" id="EMD-29759"/>
<dbReference type="EMDB" id="EMD-29760"/>
<dbReference type="EMDB" id="EMD-29771"/>
<dbReference type="EMDB" id="EMD-31465"/>
<dbReference type="EMDB" id="EMD-33329"/>
<dbReference type="EMDB" id="EMD-33330"/>
<dbReference type="EMDB" id="EMD-35370"/>
<dbReference type="EMDB" id="EMD-35371"/>
<dbReference type="EMDB" id="EMD-35375"/>
<dbReference type="EMDB" id="EMD-35413"/>
<dbReference type="EMDB" id="EMD-35414"/>
<dbReference type="EMDB" id="EMD-35596"/>
<dbReference type="EMDB" id="EMD-35597"/>
<dbReference type="EMDB" id="EMD-35599"/>
<dbReference type="EMDB" id="EMD-35639"/>
<dbReference type="EMDB" id="EMD-35649"/>
<dbReference type="EMDB" id="EMD-35651"/>
<dbReference type="EMDB" id="EMD-35672"/>
<dbReference type="EMDB" id="EMD-35673"/>
<dbReference type="EMDB" id="EMD-36178"/>
<dbReference type="EMDB" id="EMD-36179"/>
<dbReference type="EMDB" id="EMD-36180"/>
<dbReference type="EMDB" id="EMD-36181"/>
<dbReference type="EMDB" id="EMD-36838"/>
<dbReference type="EMDB" id="EMD-38629"/>
<dbReference type="EMDB" id="EMD-38630"/>
<dbReference type="EMDB" id="EMD-38631"/>
<dbReference type="EMDB" id="EMD-3883"/>
<dbReference type="EMDB" id="EMD-39455"/>
<dbReference type="EMDB" id="EMD-39456"/>
<dbReference type="EMDB" id="EMD-40205"/>
<dbReference type="EMDB" id="EMD-4070"/>
<dbReference type="EMDB" id="EMD-42351"/>
<dbReference type="EMDB" id="EMD-45170"/>
<dbReference type="EMDB" id="EMD-50641"/>
<dbReference type="EMDB" id="EMD-50642"/>
<dbReference type="EMDB" id="EMD-51132"/>
<dbReference type="EMDB" id="EMD-51452"/>
<dbReference type="EMDB" id="EMD-9701"/>
<dbReference type="EMDB" id="EMD-9702"/>
<dbReference type="EMDB" id="EMD-9703"/>
<dbReference type="SMR" id="P84098"/>
<dbReference type="BioGRID" id="112063">
    <property type="interactions" value="645"/>
</dbReference>
<dbReference type="ComplexPortal" id="CPX-5183">
    <property type="entry name" value="60S cytosolic large ribosomal subunit"/>
</dbReference>
<dbReference type="ComplexPortal" id="CPX-7664">
    <property type="entry name" value="60S cytosolic large ribosomal subunit, testis-specific variant"/>
</dbReference>
<dbReference type="ComplexPortal" id="CPX-7665">
    <property type="entry name" value="60S cytosolic large ribosomal subunit, striated muscle variant"/>
</dbReference>
<dbReference type="CORUM" id="P84098"/>
<dbReference type="FunCoup" id="P84098">
    <property type="interactions" value="2178"/>
</dbReference>
<dbReference type="IntAct" id="P84098">
    <property type="interactions" value="429"/>
</dbReference>
<dbReference type="MINT" id="P84098"/>
<dbReference type="STRING" id="9606.ENSP00000225430"/>
<dbReference type="DrugBank" id="DB02494">
    <property type="generic name" value="(S)-3-phenyllactic acid"/>
</dbReference>
<dbReference type="DrugBank" id="DB07374">
    <property type="generic name" value="Anisomycin"/>
</dbReference>
<dbReference type="DrugBank" id="DB08437">
    <property type="generic name" value="Puromycin"/>
</dbReference>
<dbReference type="GlyGen" id="P84098">
    <property type="glycosylation" value="2 sites, 1 N-linked glycan (1 site), 1 O-linked glycan (1 site)"/>
</dbReference>
<dbReference type="iPTMnet" id="P84098"/>
<dbReference type="MetOSite" id="P84098"/>
<dbReference type="PhosphoSitePlus" id="P84098"/>
<dbReference type="SwissPalm" id="P84098"/>
<dbReference type="BioMuta" id="RPL19"/>
<dbReference type="DMDM" id="51338661"/>
<dbReference type="jPOST" id="P84098"/>
<dbReference type="MassIVE" id="P84098"/>
<dbReference type="PaxDb" id="9606-ENSP00000225430"/>
<dbReference type="PeptideAtlas" id="P84098"/>
<dbReference type="ProteomicsDB" id="57751"/>
<dbReference type="Pumba" id="P84098"/>
<dbReference type="TopDownProteomics" id="P84098"/>
<dbReference type="Antibodypedia" id="28221">
    <property type="antibodies" value="197 antibodies from 32 providers"/>
</dbReference>
<dbReference type="DNASU" id="6143"/>
<dbReference type="Ensembl" id="ENST00000225430.9">
    <property type="protein sequence ID" value="ENSP00000225430.4"/>
    <property type="gene ID" value="ENSG00000108298.12"/>
</dbReference>
<dbReference type="GeneID" id="6143"/>
<dbReference type="KEGG" id="hsa:6143"/>
<dbReference type="MANE-Select" id="ENST00000225430.9">
    <property type="protein sequence ID" value="ENSP00000225430.4"/>
    <property type="RefSeq nucleotide sequence ID" value="NM_000981.4"/>
    <property type="RefSeq protein sequence ID" value="NP_000972.1"/>
</dbReference>
<dbReference type="UCSC" id="uc002hrq.1">
    <property type="organism name" value="human"/>
</dbReference>
<dbReference type="AGR" id="HGNC:10312"/>
<dbReference type="CTD" id="6143"/>
<dbReference type="DisGeNET" id="6143"/>
<dbReference type="GeneCards" id="RPL19"/>
<dbReference type="HGNC" id="HGNC:10312">
    <property type="gene designation" value="RPL19"/>
</dbReference>
<dbReference type="HPA" id="ENSG00000108298">
    <property type="expression patterns" value="Low tissue specificity"/>
</dbReference>
<dbReference type="MalaCards" id="RPL19"/>
<dbReference type="MIM" id="180466">
    <property type="type" value="gene"/>
</dbReference>
<dbReference type="neXtProt" id="NX_P84098"/>
<dbReference type="OpenTargets" id="ENSG00000108298"/>
<dbReference type="PharmGKB" id="PA34681"/>
<dbReference type="VEuPathDB" id="HostDB:ENSG00000108298"/>
<dbReference type="eggNOG" id="KOG1696">
    <property type="taxonomic scope" value="Eukaryota"/>
</dbReference>
<dbReference type="GeneTree" id="ENSGT00390000012628"/>
<dbReference type="InParanoid" id="P84098"/>
<dbReference type="OMA" id="NRVWIDP"/>
<dbReference type="OrthoDB" id="5407653at2759"/>
<dbReference type="PAN-GO" id="P84098">
    <property type="GO annotations" value="3 GO annotations based on evolutionary models"/>
</dbReference>
<dbReference type="PhylomeDB" id="P84098"/>
<dbReference type="TreeFam" id="TF313598"/>
<dbReference type="PathwayCommons" id="P84098"/>
<dbReference type="Reactome" id="R-HSA-156827">
    <property type="pathway name" value="L13a-mediated translational silencing of Ceruloplasmin expression"/>
</dbReference>
<dbReference type="Reactome" id="R-HSA-156902">
    <property type="pathway name" value="Peptide chain elongation"/>
</dbReference>
<dbReference type="Reactome" id="R-HSA-1799339">
    <property type="pathway name" value="SRP-dependent cotranslational protein targeting to membrane"/>
</dbReference>
<dbReference type="Reactome" id="R-HSA-192823">
    <property type="pathway name" value="Viral mRNA Translation"/>
</dbReference>
<dbReference type="Reactome" id="R-HSA-2408557">
    <property type="pathway name" value="Selenocysteine synthesis"/>
</dbReference>
<dbReference type="Reactome" id="R-HSA-6791226">
    <property type="pathway name" value="Major pathway of rRNA processing in the nucleolus and cytosol"/>
</dbReference>
<dbReference type="Reactome" id="R-HSA-72689">
    <property type="pathway name" value="Formation of a pool of free 40S subunits"/>
</dbReference>
<dbReference type="Reactome" id="R-HSA-72706">
    <property type="pathway name" value="GTP hydrolysis and joining of the 60S ribosomal subunit"/>
</dbReference>
<dbReference type="Reactome" id="R-HSA-72764">
    <property type="pathway name" value="Eukaryotic Translation Termination"/>
</dbReference>
<dbReference type="Reactome" id="R-HSA-9010553">
    <property type="pathway name" value="Regulation of expression of SLITs and ROBOs"/>
</dbReference>
<dbReference type="Reactome" id="R-HSA-9633012">
    <property type="pathway name" value="Response of EIF2AK4 (GCN2) to amino acid deficiency"/>
</dbReference>
<dbReference type="Reactome" id="R-HSA-975956">
    <property type="pathway name" value="Nonsense Mediated Decay (NMD) independent of the Exon Junction Complex (EJC)"/>
</dbReference>
<dbReference type="Reactome" id="R-HSA-975957">
    <property type="pathway name" value="Nonsense Mediated Decay (NMD) enhanced by the Exon Junction Complex (EJC)"/>
</dbReference>
<dbReference type="SignaLink" id="P84098"/>
<dbReference type="SIGNOR" id="P84098"/>
<dbReference type="BioGRID-ORCS" id="6143">
    <property type="hits" value="855 hits in 1169 CRISPR screens"/>
</dbReference>
<dbReference type="CD-CODE" id="91857CE7">
    <property type="entry name" value="Nucleolus"/>
</dbReference>
<dbReference type="ChiTaRS" id="RPL19">
    <property type="organism name" value="human"/>
</dbReference>
<dbReference type="EvolutionaryTrace" id="P84098"/>
<dbReference type="GeneWiki" id="RPL19"/>
<dbReference type="GenomeRNAi" id="6143"/>
<dbReference type="Pharos" id="P84098">
    <property type="development level" value="Tbio"/>
</dbReference>
<dbReference type="PRO" id="PR:P84098"/>
<dbReference type="Proteomes" id="UP000005640">
    <property type="component" value="Chromosome 17"/>
</dbReference>
<dbReference type="RNAct" id="P84098">
    <property type="molecule type" value="protein"/>
</dbReference>
<dbReference type="Bgee" id="ENSG00000108298">
    <property type="expression patterns" value="Expressed in primordial germ cell in gonad and 210 other cell types or tissues"/>
</dbReference>
<dbReference type="ExpressionAtlas" id="P84098">
    <property type="expression patterns" value="baseline and differential"/>
</dbReference>
<dbReference type="GO" id="GO:0005737">
    <property type="term" value="C:cytoplasm"/>
    <property type="evidence" value="ECO:0000303"/>
    <property type="project" value="ComplexPortal"/>
</dbReference>
<dbReference type="GO" id="GO:0005829">
    <property type="term" value="C:cytosol"/>
    <property type="evidence" value="ECO:0000314"/>
    <property type="project" value="HPA"/>
</dbReference>
<dbReference type="GO" id="GO:0022625">
    <property type="term" value="C:cytosolic large ribosomal subunit"/>
    <property type="evidence" value="ECO:0000314"/>
    <property type="project" value="UniProtKB"/>
</dbReference>
<dbReference type="GO" id="GO:0022626">
    <property type="term" value="C:cytosolic ribosome"/>
    <property type="evidence" value="ECO:0000314"/>
    <property type="project" value="FlyBase"/>
</dbReference>
<dbReference type="GO" id="GO:0005925">
    <property type="term" value="C:focal adhesion"/>
    <property type="evidence" value="ECO:0007005"/>
    <property type="project" value="UniProtKB"/>
</dbReference>
<dbReference type="GO" id="GO:0016020">
    <property type="term" value="C:membrane"/>
    <property type="evidence" value="ECO:0007005"/>
    <property type="project" value="UniProtKB"/>
</dbReference>
<dbReference type="GO" id="GO:0005730">
    <property type="term" value="C:nucleolus"/>
    <property type="evidence" value="ECO:0000314"/>
    <property type="project" value="HPA"/>
</dbReference>
<dbReference type="GO" id="GO:0045202">
    <property type="term" value="C:synapse"/>
    <property type="evidence" value="ECO:0007669"/>
    <property type="project" value="Ensembl"/>
</dbReference>
<dbReference type="GO" id="GO:0003723">
    <property type="term" value="F:RNA binding"/>
    <property type="evidence" value="ECO:0007005"/>
    <property type="project" value="UniProtKB"/>
</dbReference>
<dbReference type="GO" id="GO:0003735">
    <property type="term" value="F:structural constituent of ribosome"/>
    <property type="evidence" value="ECO:0000314"/>
    <property type="project" value="UniProtKB"/>
</dbReference>
<dbReference type="GO" id="GO:0002181">
    <property type="term" value="P:cytoplasmic translation"/>
    <property type="evidence" value="ECO:0000314"/>
    <property type="project" value="UniProtKB"/>
</dbReference>
<dbReference type="GO" id="GO:0006412">
    <property type="term" value="P:translation"/>
    <property type="evidence" value="ECO:0000304"/>
    <property type="project" value="UniProtKB"/>
</dbReference>
<dbReference type="CDD" id="cd01417">
    <property type="entry name" value="Ribosomal_L19e_E"/>
    <property type="match status" value="1"/>
</dbReference>
<dbReference type="FunFam" id="1.10.1200.240:FF:000001">
    <property type="entry name" value="Ribosomal protein L19"/>
    <property type="match status" value="1"/>
</dbReference>
<dbReference type="FunFam" id="1.10.1650.10:FF:000001">
    <property type="entry name" value="Ribosomal protein L19"/>
    <property type="match status" value="1"/>
</dbReference>
<dbReference type="Gene3D" id="1.10.1200.240">
    <property type="match status" value="1"/>
</dbReference>
<dbReference type="Gene3D" id="1.10.1650.10">
    <property type="match status" value="1"/>
</dbReference>
<dbReference type="HAMAP" id="MF_01475">
    <property type="entry name" value="Ribosomal_eL19"/>
    <property type="match status" value="1"/>
</dbReference>
<dbReference type="InterPro" id="IPR035970">
    <property type="entry name" value="60S_ribosomal_eL19_sf"/>
</dbReference>
<dbReference type="InterPro" id="IPR039547">
    <property type="entry name" value="Ribosomal_eL19"/>
</dbReference>
<dbReference type="InterPro" id="IPR023638">
    <property type="entry name" value="Ribosomal_eL19_CS"/>
</dbReference>
<dbReference type="InterPro" id="IPR000196">
    <property type="entry name" value="Ribosomal_eL19_dom"/>
</dbReference>
<dbReference type="InterPro" id="IPR015972">
    <property type="entry name" value="Ribosomal_eL19_dom1"/>
</dbReference>
<dbReference type="InterPro" id="IPR033935">
    <property type="entry name" value="Ribosomal_eL19_euk"/>
</dbReference>
<dbReference type="NCBIfam" id="NF006343">
    <property type="entry name" value="PRK08570.1"/>
    <property type="match status" value="1"/>
</dbReference>
<dbReference type="PANTHER" id="PTHR10722">
    <property type="entry name" value="60S RIBOSOMAL PROTEIN L19"/>
    <property type="match status" value="1"/>
</dbReference>
<dbReference type="Pfam" id="PF01280">
    <property type="entry name" value="Ribosomal_L19e"/>
    <property type="match status" value="1"/>
</dbReference>
<dbReference type="Pfam" id="PF25476">
    <property type="entry name" value="Ribosomal_L19e_C"/>
    <property type="match status" value="1"/>
</dbReference>
<dbReference type="SMART" id="SM01416">
    <property type="entry name" value="Ribosomal_L19e"/>
    <property type="match status" value="1"/>
</dbReference>
<dbReference type="SUPFAM" id="SSF48140">
    <property type="entry name" value="Ribosomal protein L19 (L19e)"/>
    <property type="match status" value="1"/>
</dbReference>
<dbReference type="PROSITE" id="PS00526">
    <property type="entry name" value="RIBOSOMAL_L19E"/>
    <property type="match status" value="1"/>
</dbReference>
<sequence length="196" mass="23466">MSMLRLQKRLASSVLRCGKKKVWLDPNETNEIANANSRQQIRKLIKDGLIIRKPVTVHSRARCRKNTLARRKGRHMGIGKRKGTANARMPEKVTWMRRMRILRRLLRRYRESKKIDRHMYHSLYLKVKGNVFKNKRILMEHIHKLKADKARKKLLADQAEARRSKTKEARKRREERLQAKKEEIIKTLSKEEETKK</sequence>
<protein>
    <recommendedName>
        <fullName evidence="5">Large ribosomal subunit protein eL19</fullName>
    </recommendedName>
    <alternativeName>
        <fullName>60S ribosomal protein L19</fullName>
    </alternativeName>
</protein>
<organism>
    <name type="scientific">Homo sapiens</name>
    <name type="common">Human</name>
    <dbReference type="NCBI Taxonomy" id="9606"/>
    <lineage>
        <taxon>Eukaryota</taxon>
        <taxon>Metazoa</taxon>
        <taxon>Chordata</taxon>
        <taxon>Craniata</taxon>
        <taxon>Vertebrata</taxon>
        <taxon>Euteleostomi</taxon>
        <taxon>Mammalia</taxon>
        <taxon>Eutheria</taxon>
        <taxon>Euarchontoglires</taxon>
        <taxon>Primates</taxon>
        <taxon>Haplorrhini</taxon>
        <taxon>Catarrhini</taxon>
        <taxon>Hominidae</taxon>
        <taxon>Homo</taxon>
    </lineage>
</organism>